<feature type="chain" id="PRO_0000186497" description="PTS system N,N'-diacetylchitobiose-specific EIIA component">
    <location>
        <begin position="1"/>
        <end position="116"/>
    </location>
</feature>
<feature type="domain" description="PTS EIIA type-3" evidence="2">
    <location>
        <begin position="15"/>
        <end position="113"/>
    </location>
</feature>
<feature type="active site" description="Tele-phosphohistidine intermediate" evidence="1">
    <location>
        <position position="89"/>
    </location>
</feature>
<feature type="modified residue" description="Phosphohistidine; by HPr" evidence="2">
    <location>
        <position position="89"/>
    </location>
</feature>
<organism>
    <name type="scientific">Shigella flexneri</name>
    <dbReference type="NCBI Taxonomy" id="623"/>
    <lineage>
        <taxon>Bacteria</taxon>
        <taxon>Pseudomonadati</taxon>
        <taxon>Pseudomonadota</taxon>
        <taxon>Gammaproteobacteria</taxon>
        <taxon>Enterobacterales</taxon>
        <taxon>Enterobacteriaceae</taxon>
        <taxon>Shigella</taxon>
    </lineage>
</organism>
<accession>P69794</accession>
<accession>P17335</accession>
<accession>Q47092</accession>
<accession>Q47093</accession>
<accession>Q47094</accession>
<accession>Q57128</accession>
<reference key="1">
    <citation type="journal article" date="2002" name="Nucleic Acids Res.">
        <title>Genome sequence of Shigella flexneri 2a: insights into pathogenicity through comparison with genomes of Escherichia coli K12 and O157.</title>
        <authorList>
            <person name="Jin Q."/>
            <person name="Yuan Z."/>
            <person name="Xu J."/>
            <person name="Wang Y."/>
            <person name="Shen Y."/>
            <person name="Lu W."/>
            <person name="Wang J."/>
            <person name="Liu H."/>
            <person name="Yang J."/>
            <person name="Yang F."/>
            <person name="Zhang X."/>
            <person name="Zhang J."/>
            <person name="Yang G."/>
            <person name="Wu H."/>
            <person name="Qu D."/>
            <person name="Dong J."/>
            <person name="Sun L."/>
            <person name="Xue Y."/>
            <person name="Zhao A."/>
            <person name="Gao Y."/>
            <person name="Zhu J."/>
            <person name="Kan B."/>
            <person name="Ding K."/>
            <person name="Chen S."/>
            <person name="Cheng H."/>
            <person name="Yao Z."/>
            <person name="He B."/>
            <person name="Chen R."/>
            <person name="Ma D."/>
            <person name="Qiang B."/>
            <person name="Wen Y."/>
            <person name="Hou Y."/>
            <person name="Yu J."/>
        </authorList>
    </citation>
    <scope>NUCLEOTIDE SEQUENCE [LARGE SCALE GENOMIC DNA]</scope>
    <source>
        <strain>301 / Serotype 2a</strain>
    </source>
</reference>
<reference key="2">
    <citation type="journal article" date="2003" name="Infect. Immun.">
        <title>Complete genome sequence and comparative genomics of Shigella flexneri serotype 2a strain 2457T.</title>
        <authorList>
            <person name="Wei J."/>
            <person name="Goldberg M.B."/>
            <person name="Burland V."/>
            <person name="Venkatesan M.M."/>
            <person name="Deng W."/>
            <person name="Fournier G."/>
            <person name="Mayhew G.F."/>
            <person name="Plunkett G. III"/>
            <person name="Rose D.J."/>
            <person name="Darling A."/>
            <person name="Mau B."/>
            <person name="Perna N.T."/>
            <person name="Payne S.M."/>
            <person name="Runyen-Janecky L.J."/>
            <person name="Zhou S."/>
            <person name="Schwartz D.C."/>
            <person name="Blattner F.R."/>
        </authorList>
    </citation>
    <scope>NUCLEOTIDE SEQUENCE [LARGE SCALE GENOMIC DNA]</scope>
    <source>
        <strain>ATCC 700930 / 2457T / Serotype 2a</strain>
    </source>
</reference>
<protein>
    <recommendedName>
        <fullName evidence="1">PTS system N,N'-diacetylchitobiose-specific EIIA component</fullName>
    </recommendedName>
    <alternativeName>
        <fullName evidence="1">EIIA-Chb</fullName>
    </alternativeName>
    <alternativeName>
        <fullName evidence="1">EIII-Chb</fullName>
    </alternativeName>
    <alternativeName>
        <fullName evidence="1">IIIcel</fullName>
    </alternativeName>
    <alternativeName>
        <fullName evidence="1">N,N'-diacetylchitobiose-specific phosphotransferase enzyme IIA component</fullName>
    </alternativeName>
</protein>
<name>PTQA_SHIFL</name>
<gene>
    <name type="primary">chbA</name>
    <name type="synonym">celC</name>
    <name type="ordered locus">SF1490</name>
    <name type="ordered locus">S1607</name>
</gene>
<keyword id="KW-0963">Cytoplasm</keyword>
<keyword id="KW-0597">Phosphoprotein</keyword>
<keyword id="KW-0598">Phosphotransferase system</keyword>
<keyword id="KW-1185">Reference proteome</keyword>
<keyword id="KW-0762">Sugar transport</keyword>
<keyword id="KW-0808">Transferase</keyword>
<keyword id="KW-0813">Transport</keyword>
<comment type="function">
    <text evidence="1">The phosphoenolpyruvate-dependent sugar phosphotransferase system (sugar PTS), a major carbohydrate active transport system, catalyzes the phosphorylation of incoming sugar substrates concomitantly with their translocation across the cell membrane. The enzyme II ChbABC PTS system is involved in the transport of the chitin disaccharide N,N'-diacetylchitobiose (GlcNAc2).</text>
</comment>
<comment type="cofactor">
    <cofactor evidence="1">
        <name>Mg(2+)</name>
        <dbReference type="ChEBI" id="CHEBI:18420"/>
    </cofactor>
    <text evidence="1">Can also use copper and nickel with lower efficiency.</text>
</comment>
<comment type="subunit">
    <text evidence="1">Forms a complex with ChbB (EIIB). ChbA is a homotrimer.</text>
</comment>
<comment type="subcellular location">
    <subcellularLocation>
        <location evidence="3">Cytoplasm</location>
    </subcellularLocation>
</comment>
<comment type="induction">
    <text evidence="1">By GlcNAc2, GlcNAc3 and beta-N,N'-diacetylchitobiose (Me-TCB).</text>
</comment>
<comment type="domain">
    <text evidence="2">The PTS EIIA type-3 domain is phosphorylated by phospho-HPr on a histidyl residue. Then, it transfers the phosphoryl group to the PTS EIIB type-3 domain.</text>
</comment>
<proteinExistence type="inferred from homology"/>
<sequence>MMDLDNIPDTQTEAEELEEVVMGLIINSGQARSLAYAALKQAKQGDFAAAKAMMDQSRMALNEAHLVQTKLIEGDAGEGKMKVSLVLVHAQDHLMTSMLARELITELIELHEKLKA</sequence>
<dbReference type="EMBL" id="AE005674">
    <property type="protein sequence ID" value="AAN43082.2"/>
    <property type="molecule type" value="Genomic_DNA"/>
</dbReference>
<dbReference type="EMBL" id="AE014073">
    <property type="protein sequence ID" value="AAP16974.1"/>
    <property type="molecule type" value="Genomic_DNA"/>
</dbReference>
<dbReference type="RefSeq" id="NP_707375.2">
    <property type="nucleotide sequence ID" value="NC_004337.2"/>
</dbReference>
<dbReference type="RefSeq" id="WP_000968919.1">
    <property type="nucleotide sequence ID" value="NZ_WPGW01000081.1"/>
</dbReference>
<dbReference type="BMRB" id="P69794"/>
<dbReference type="SMR" id="P69794"/>
<dbReference type="STRING" id="198214.SF1490"/>
<dbReference type="PaxDb" id="198214-SF1490"/>
<dbReference type="GeneID" id="1026385"/>
<dbReference type="GeneID" id="93775949"/>
<dbReference type="KEGG" id="sfl:SF1490"/>
<dbReference type="KEGG" id="sfx:S1607"/>
<dbReference type="PATRIC" id="fig|198214.7.peg.1758"/>
<dbReference type="HOGENOM" id="CLU_152490_3_0_6"/>
<dbReference type="Proteomes" id="UP000001006">
    <property type="component" value="Chromosome"/>
</dbReference>
<dbReference type="Proteomes" id="UP000002673">
    <property type="component" value="Chromosome"/>
</dbReference>
<dbReference type="GO" id="GO:0005737">
    <property type="term" value="C:cytoplasm"/>
    <property type="evidence" value="ECO:0007669"/>
    <property type="project" value="UniProtKB-SubCell"/>
</dbReference>
<dbReference type="GO" id="GO:0016740">
    <property type="term" value="F:transferase activity"/>
    <property type="evidence" value="ECO:0007669"/>
    <property type="project" value="UniProtKB-KW"/>
</dbReference>
<dbReference type="GO" id="GO:0009401">
    <property type="term" value="P:phosphoenolpyruvate-dependent sugar phosphotransferase system"/>
    <property type="evidence" value="ECO:0007669"/>
    <property type="project" value="UniProtKB-KW"/>
</dbReference>
<dbReference type="CDD" id="cd00215">
    <property type="entry name" value="PTS_IIA_lac"/>
    <property type="match status" value="1"/>
</dbReference>
<dbReference type="FunFam" id="1.20.58.80:FF:000001">
    <property type="entry name" value="PTS system, lactose-specific IIa component"/>
    <property type="match status" value="1"/>
</dbReference>
<dbReference type="Gene3D" id="1.20.58.80">
    <property type="entry name" value="Phosphotransferase system, lactose/cellobiose-type IIA subunit"/>
    <property type="match status" value="1"/>
</dbReference>
<dbReference type="InterPro" id="IPR003188">
    <property type="entry name" value="PTS_IIA_lac/cel"/>
</dbReference>
<dbReference type="InterPro" id="IPR036542">
    <property type="entry name" value="PTS_IIA_lac/cel_sf"/>
</dbReference>
<dbReference type="NCBIfam" id="TIGR00823">
    <property type="entry name" value="EIIA-LAC"/>
    <property type="match status" value="1"/>
</dbReference>
<dbReference type="NCBIfam" id="NF007768">
    <property type="entry name" value="PRK10454.1"/>
    <property type="match status" value="1"/>
</dbReference>
<dbReference type="PANTHER" id="PTHR34382">
    <property type="entry name" value="PTS SYSTEM N,N'-DIACETYLCHITOBIOSE-SPECIFIC EIIA COMPONENT"/>
    <property type="match status" value="1"/>
</dbReference>
<dbReference type="PANTHER" id="PTHR34382:SF7">
    <property type="entry name" value="PTS SYSTEM N,N'-DIACETYLCHITOBIOSE-SPECIFIC EIIA COMPONENT"/>
    <property type="match status" value="1"/>
</dbReference>
<dbReference type="Pfam" id="PF02255">
    <property type="entry name" value="PTS_IIA"/>
    <property type="match status" value="1"/>
</dbReference>
<dbReference type="PIRSF" id="PIRSF000699">
    <property type="entry name" value="PTS_IILac_III"/>
    <property type="match status" value="1"/>
</dbReference>
<dbReference type="SUPFAM" id="SSF46973">
    <property type="entry name" value="Enzyme IIa from lactose specific PTS, IIa-lac"/>
    <property type="match status" value="1"/>
</dbReference>
<dbReference type="PROSITE" id="PS51095">
    <property type="entry name" value="PTS_EIIA_TYPE_3"/>
    <property type="match status" value="1"/>
</dbReference>
<evidence type="ECO:0000250" key="1">
    <source>
        <dbReference type="UniProtKB" id="P69791"/>
    </source>
</evidence>
<evidence type="ECO:0000255" key="2">
    <source>
        <dbReference type="PROSITE-ProRule" id="PRU00418"/>
    </source>
</evidence>
<evidence type="ECO:0000305" key="3"/>